<feature type="chain" id="PRO_0000064874" description="Anaerobic magnesium-protoporphyrin IX monomethyl ester cyclase">
    <location>
        <begin position="1"/>
        <end position="612"/>
    </location>
</feature>
<feature type="domain" description="B12-binding" evidence="2">
    <location>
        <begin position="9"/>
        <end position="143"/>
    </location>
</feature>
<feature type="domain" description="Radical SAM core" evidence="3">
    <location>
        <begin position="190"/>
        <end position="417"/>
    </location>
</feature>
<feature type="binding site" evidence="1">
    <location>
        <position position="204"/>
    </location>
    <ligand>
        <name>[4Fe-4S] cluster</name>
        <dbReference type="ChEBI" id="CHEBI:49883"/>
    </ligand>
</feature>
<feature type="binding site" evidence="1">
    <location>
        <position position="208"/>
    </location>
    <ligand>
        <name>[4Fe-4S] cluster</name>
        <dbReference type="ChEBI" id="CHEBI:49883"/>
    </ligand>
</feature>
<feature type="binding site" evidence="1">
    <location>
        <position position="211"/>
    </location>
    <ligand>
        <name>[4Fe-4S] cluster</name>
        <dbReference type="ChEBI" id="CHEBI:49883"/>
    </ligand>
</feature>
<feature type="sequence conflict" description="In Ref. 1; CAB38729." evidence="4" ref="1">
    <original>V</original>
    <variation>A</variation>
    <location>
        <position position="121"/>
    </location>
</feature>
<feature type="sequence conflict" description="In Ref. 1; CAB38729." evidence="4" ref="1">
    <original>A</original>
    <variation>P</variation>
    <location>
        <position position="196"/>
    </location>
</feature>
<feature type="sequence conflict" description="In Ref. 2; AAF24279." evidence="4" ref="2">
    <original>I</original>
    <variation>M</variation>
    <location>
        <position position="253"/>
    </location>
</feature>
<feature type="sequence conflict" description="In Ref. 1; CAB38729 and 2; AAF24279." evidence="4" ref="1 2">
    <original>LRVQGKARAEERNAAKAEA</original>
    <variation>ARAGQGPCRGAQCGQGRG</variation>
    <location>
        <begin position="518"/>
        <end position="536"/>
    </location>
</feature>
<feature type="sequence conflict" description="In Ref. 1; CAB38729." evidence="4" ref="1">
    <location>
        <begin position="570"/>
        <end position="587"/>
    </location>
</feature>
<feature type="sequence conflict" description="In Ref. 2; AAF24279." evidence="4" ref="2">
    <original>G</original>
    <variation>S</variation>
    <location>
        <position position="577"/>
    </location>
</feature>
<evidence type="ECO:0000250" key="1">
    <source>
        <dbReference type="UniProtKB" id="P26168"/>
    </source>
</evidence>
<evidence type="ECO:0000255" key="2">
    <source>
        <dbReference type="PROSITE-ProRule" id="PRU00666"/>
    </source>
</evidence>
<evidence type="ECO:0000255" key="3">
    <source>
        <dbReference type="PROSITE-ProRule" id="PRU01266"/>
    </source>
</evidence>
<evidence type="ECO:0000305" key="4"/>
<dbReference type="EC" id="1.21.98.3" evidence="1"/>
<dbReference type="EMBL" id="AJ010302">
    <property type="protein sequence ID" value="CAB38729.1"/>
    <property type="molecule type" value="Genomic_DNA"/>
</dbReference>
<dbReference type="EMBL" id="AF195122">
    <property type="protein sequence ID" value="AAF24279.1"/>
    <property type="molecule type" value="Genomic_DNA"/>
</dbReference>
<dbReference type="EMBL" id="CP000143">
    <property type="protein sequence ID" value="ABA79454.1"/>
    <property type="molecule type" value="Genomic_DNA"/>
</dbReference>
<dbReference type="PIR" id="T50735">
    <property type="entry name" value="T50735"/>
</dbReference>
<dbReference type="RefSeq" id="WP_011338122.1">
    <property type="nucleotide sequence ID" value="NZ_AKVW01000001.1"/>
</dbReference>
<dbReference type="RefSeq" id="YP_353355.1">
    <property type="nucleotide sequence ID" value="NC_007493.2"/>
</dbReference>
<dbReference type="SMR" id="Q9RFD3"/>
<dbReference type="STRING" id="272943.RSP_0281"/>
<dbReference type="EnsemblBacteria" id="ABA79454">
    <property type="protein sequence ID" value="ABA79454"/>
    <property type="gene ID" value="RSP_0281"/>
</dbReference>
<dbReference type="GeneID" id="3719193"/>
<dbReference type="KEGG" id="rsp:RSP_0281"/>
<dbReference type="PATRIC" id="fig|272943.9.peg.2224"/>
<dbReference type="eggNOG" id="COG1032">
    <property type="taxonomic scope" value="Bacteria"/>
</dbReference>
<dbReference type="OrthoDB" id="9801424at2"/>
<dbReference type="PhylomeDB" id="Q9RFD3"/>
<dbReference type="UniPathway" id="UPA00671"/>
<dbReference type="Proteomes" id="UP000002703">
    <property type="component" value="Chromosome 1"/>
</dbReference>
<dbReference type="GO" id="GO:0005829">
    <property type="term" value="C:cytosol"/>
    <property type="evidence" value="ECO:0007669"/>
    <property type="project" value="TreeGrafter"/>
</dbReference>
<dbReference type="GO" id="GO:0051539">
    <property type="term" value="F:4 iron, 4 sulfur cluster binding"/>
    <property type="evidence" value="ECO:0007669"/>
    <property type="project" value="UniProtKB-KW"/>
</dbReference>
<dbReference type="GO" id="GO:0031419">
    <property type="term" value="F:cobalamin binding"/>
    <property type="evidence" value="ECO:0007669"/>
    <property type="project" value="UniProtKB-KW"/>
</dbReference>
<dbReference type="GO" id="GO:0046872">
    <property type="term" value="F:metal ion binding"/>
    <property type="evidence" value="ECO:0007669"/>
    <property type="project" value="UniProtKB-KW"/>
</dbReference>
<dbReference type="GO" id="GO:0016491">
    <property type="term" value="F:oxidoreductase activity"/>
    <property type="evidence" value="ECO:0007669"/>
    <property type="project" value="UniProtKB-KW"/>
</dbReference>
<dbReference type="GO" id="GO:0036070">
    <property type="term" value="P:light-independent bacteriochlorophyll biosynthetic process"/>
    <property type="evidence" value="ECO:0007669"/>
    <property type="project" value="UniProtKB-UniPathway"/>
</dbReference>
<dbReference type="GO" id="GO:0015979">
    <property type="term" value="P:photosynthesis"/>
    <property type="evidence" value="ECO:0007669"/>
    <property type="project" value="UniProtKB-KW"/>
</dbReference>
<dbReference type="CDD" id="cd01335">
    <property type="entry name" value="Radical_SAM"/>
    <property type="match status" value="1"/>
</dbReference>
<dbReference type="CDD" id="cd02068">
    <property type="entry name" value="radical_SAM_B12_BD"/>
    <property type="match status" value="1"/>
</dbReference>
<dbReference type="Gene3D" id="3.40.50.280">
    <property type="entry name" value="Cobalamin-binding domain"/>
    <property type="match status" value="1"/>
</dbReference>
<dbReference type="Gene3D" id="3.80.30.20">
    <property type="entry name" value="tm_1862 like domain"/>
    <property type="match status" value="1"/>
</dbReference>
<dbReference type="InterPro" id="IPR006158">
    <property type="entry name" value="Cobalamin-bd"/>
</dbReference>
<dbReference type="InterPro" id="IPR006638">
    <property type="entry name" value="Elp3/MiaA/NifB-like_rSAM"/>
</dbReference>
<dbReference type="InterPro" id="IPR034466">
    <property type="entry name" value="Methyltransferase_Class_B"/>
</dbReference>
<dbReference type="InterPro" id="IPR007197">
    <property type="entry name" value="rSAM"/>
</dbReference>
<dbReference type="InterPro" id="IPR023404">
    <property type="entry name" value="rSAM_horseshoe"/>
</dbReference>
<dbReference type="InterPro" id="IPR051198">
    <property type="entry name" value="Tetrapyrrole_Bchl_Biosynth_MTs"/>
</dbReference>
<dbReference type="NCBIfam" id="TIGR02026">
    <property type="entry name" value="BchE"/>
    <property type="match status" value="1"/>
</dbReference>
<dbReference type="PANTHER" id="PTHR43409:SF13">
    <property type="entry name" value="ANAEROBIC MAGNESIUM-PROTOPORPHYRIN IX MONOMETHYL ESTER CYCLASE"/>
    <property type="match status" value="1"/>
</dbReference>
<dbReference type="PANTHER" id="PTHR43409">
    <property type="entry name" value="ANAEROBIC MAGNESIUM-PROTOPORPHYRIN IX MONOMETHYL ESTER CYCLASE-RELATED"/>
    <property type="match status" value="1"/>
</dbReference>
<dbReference type="Pfam" id="PF02310">
    <property type="entry name" value="B12-binding"/>
    <property type="match status" value="1"/>
</dbReference>
<dbReference type="Pfam" id="PF04055">
    <property type="entry name" value="Radical_SAM"/>
    <property type="match status" value="1"/>
</dbReference>
<dbReference type="SFLD" id="SFLDF00302">
    <property type="entry name" value="anaerobic_magnesium-protoporph"/>
    <property type="match status" value="1"/>
</dbReference>
<dbReference type="SFLD" id="SFLDG01123">
    <property type="entry name" value="methyltransferase_(Class_B)"/>
    <property type="match status" value="1"/>
</dbReference>
<dbReference type="SFLD" id="SFLDS00029">
    <property type="entry name" value="Radical_SAM"/>
    <property type="match status" value="1"/>
</dbReference>
<dbReference type="SMART" id="SM00729">
    <property type="entry name" value="Elp3"/>
    <property type="match status" value="1"/>
</dbReference>
<dbReference type="SUPFAM" id="SSF102114">
    <property type="entry name" value="Radical SAM enzymes"/>
    <property type="match status" value="1"/>
</dbReference>
<dbReference type="PROSITE" id="PS51332">
    <property type="entry name" value="B12_BINDING"/>
    <property type="match status" value="1"/>
</dbReference>
<dbReference type="PROSITE" id="PS51918">
    <property type="entry name" value="RADICAL_SAM"/>
    <property type="match status" value="1"/>
</dbReference>
<sequence length="612" mass="69219">MRIVFVHPNYHSGGAEIAGSWPPAWVAYLCGALKKAGYTDYHFIDAMTDYVSHEKLAEKLRELQPDIVATTAITPSIYVAEETLKVAMEVVPNALRVLGGIHATFMFRQVLEEAPWIDVIVRGEGEEVLVNLVKAYEADNFAETRRQVKGLAFLDGDEIVSTAAAPTIRDVDSIDPDWGIINWKNYIYEPLGVRVAIPNMARGCPFTCSFCSQWKFWRDYRVRDPKKVVDEIEKLVNEHGVGFFILADEEPTINRKKFIEFCEEMIARGLPDKVKWGINTRVTDVKRDKELLKFYRKAGLVHISLGTEAAAQLKLDVFNKETTVAENKEAIRLLREADIFTEAQFIVGLDNETKETLEETYRMAWDWQPDLANWSMYTPWPFTPLFQELRDQVEVFDYSKYNFVTPIMKPKALTRGELLDGVMNNYRRFYMKKALFHYPWRGTGFRRRYLLGCLKAFLKAGVGRTFYDLGKAGYWGPQSKDKVDFHFDETRKIGNAQMADWEASADRAAKAAERREALRVQGKARAEERNAAKAEAAPILTAGGGGCGGHADGSDCGCGGKKQQQVDEFHVPMACGGGRQQMAEDEFAMPMACGGGKQQMEEAEERLVRPAE</sequence>
<keyword id="KW-0004">4Fe-4S</keyword>
<keyword id="KW-0077">Bacteriochlorophyll biosynthesis</keyword>
<keyword id="KW-0149">Chlorophyll biosynthesis</keyword>
<keyword id="KW-0846">Cobalamin</keyword>
<keyword id="KW-0170">Cobalt</keyword>
<keyword id="KW-0408">Iron</keyword>
<keyword id="KW-0411">Iron-sulfur</keyword>
<keyword id="KW-0479">Metal-binding</keyword>
<keyword id="KW-0560">Oxidoreductase</keyword>
<keyword id="KW-0602">Photosynthesis</keyword>
<keyword id="KW-1185">Reference proteome</keyword>
<keyword id="KW-0949">S-adenosyl-L-methionine</keyword>
<protein>
    <recommendedName>
        <fullName evidence="1">Anaerobic magnesium-protoporphyrin IX monomethyl ester cyclase</fullName>
        <shortName evidence="1">MPE cyclase</shortName>
        <ecNumber evidence="1">1.21.98.3</ecNumber>
    </recommendedName>
</protein>
<accession>Q9RFD3</accession>
<accession>Q3J180</accession>
<accession>Q53225</accession>
<proteinExistence type="inferred from homology"/>
<organism>
    <name type="scientific">Cereibacter sphaeroides (strain ATCC 17023 / DSM 158 / JCM 6121 / CCUG 31486 / LMG 2827 / NBRC 12203 / NCIMB 8253 / ATH 2.4.1.)</name>
    <name type="common">Rhodobacter sphaeroides</name>
    <dbReference type="NCBI Taxonomy" id="272943"/>
    <lineage>
        <taxon>Bacteria</taxon>
        <taxon>Pseudomonadati</taxon>
        <taxon>Pseudomonadota</taxon>
        <taxon>Alphaproteobacteria</taxon>
        <taxon>Rhodobacterales</taxon>
        <taxon>Paracoccaceae</taxon>
        <taxon>Cereibacter</taxon>
    </lineage>
</organism>
<comment type="function">
    <text evidence="1">Involved in the tetrapyrrole biosynthetic pathways leading to chlorophyll and bacteriochlorophyll (BChl). Catalyzes the anaerobic formation of the isocyclic ring (E-ring) in Mg-protoporphyrin monomethyl ester (MPE) to yield protochlorophyllide a (PChlide a) via a six-electron oxidation and the formation of an oxo group at position C13 using oxygen from a water molecule.</text>
</comment>
<comment type="catalytic activity">
    <reaction evidence="1">
        <text>Mg-protoporphyrin IX 13-monomethyl ester + 3 S-adenosyl-L-methionine + H2O = 3,8-divinyl protochlorophyllide a + 3 5'-deoxyadenosine + 3 L-methionine + 4 H(+)</text>
        <dbReference type="Rhea" id="RHEA:49096"/>
        <dbReference type="ChEBI" id="CHEBI:15377"/>
        <dbReference type="ChEBI" id="CHEBI:15378"/>
        <dbReference type="ChEBI" id="CHEBI:17319"/>
        <dbReference type="ChEBI" id="CHEBI:57844"/>
        <dbReference type="ChEBI" id="CHEBI:58632"/>
        <dbReference type="ChEBI" id="CHEBI:59789"/>
        <dbReference type="ChEBI" id="CHEBI:60491"/>
        <dbReference type="EC" id="1.21.98.3"/>
    </reaction>
</comment>
<comment type="cofactor">
    <cofactor evidence="1">
        <name>[4Fe-4S] cluster</name>
        <dbReference type="ChEBI" id="CHEBI:49883"/>
    </cofactor>
    <text evidence="1">Binds 1 [4Fe-4S] cluster.</text>
</comment>
<comment type="cofactor">
    <cofactor evidence="1">
        <name>adenosylcob(III)alamin</name>
        <dbReference type="ChEBI" id="CHEBI:18408"/>
    </cofactor>
    <text evidence="1">Binds 1 adenosylcobalamin.</text>
</comment>
<comment type="pathway">
    <text evidence="1">Porphyrin-containing compound metabolism; bacteriochlorophyll biosynthesis (light-independent).</text>
</comment>
<comment type="similarity">
    <text evidence="4">Belongs to the BchE family.</text>
</comment>
<name>BCHE_CERS4</name>
<reference key="1">
    <citation type="journal article" date="1999" name="Photosyn. Res.">
        <title>The photosynthesis gene cluster of Rhodobacter sphaeroides.</title>
        <authorList>
            <person name="Naylor G.W."/>
            <person name="Addlesee H.A."/>
            <person name="Gibson L.C.D."/>
            <person name="Hunter C.N."/>
        </authorList>
    </citation>
    <scope>NUCLEOTIDE SEQUENCE [GENOMIC DNA]</scope>
</reference>
<reference key="2">
    <citation type="journal article" date="2000" name="Nucleic Acids Res.">
        <title>DNA sequence analysis of the photosynthesis region of Rhodobacter sphaeroides 2.4.1.</title>
        <authorList>
            <person name="Choudhary M."/>
            <person name="Kaplan S."/>
        </authorList>
    </citation>
    <scope>NUCLEOTIDE SEQUENCE [GENOMIC DNA]</scope>
</reference>
<reference key="3">
    <citation type="submission" date="2005-09" db="EMBL/GenBank/DDBJ databases">
        <title>Complete sequence of chromosome 1 of Rhodobacter sphaeroides 2.4.1.</title>
        <authorList>
            <person name="Copeland A."/>
            <person name="Lucas S."/>
            <person name="Lapidus A."/>
            <person name="Barry K."/>
            <person name="Detter J.C."/>
            <person name="Glavina T."/>
            <person name="Hammon N."/>
            <person name="Israni S."/>
            <person name="Pitluck S."/>
            <person name="Richardson P."/>
            <person name="Mackenzie C."/>
            <person name="Choudhary M."/>
            <person name="Larimer F."/>
            <person name="Hauser L.J."/>
            <person name="Land M."/>
            <person name="Donohue T.J."/>
            <person name="Kaplan S."/>
        </authorList>
    </citation>
    <scope>NUCLEOTIDE SEQUENCE [LARGE SCALE GENOMIC DNA]</scope>
    <source>
        <strain>ATCC 17023 / DSM 158 / JCM 6121 / CCUG 31486 / LMG 2827 / NBRC 12203 / NCIMB 8253 / ATH 2.4.1.</strain>
    </source>
</reference>
<gene>
    <name evidence="1" type="primary">bchE</name>
    <name type="ordered locus">RHOS4_18860</name>
    <name type="ORF">RSP_0281</name>
</gene>